<keyword id="KW-0066">ATP synthesis</keyword>
<keyword id="KW-0067">ATP-binding</keyword>
<keyword id="KW-0997">Cell inner membrane</keyword>
<keyword id="KW-1003">Cell membrane</keyword>
<keyword id="KW-0139">CF(1)</keyword>
<keyword id="KW-0375">Hydrogen ion transport</keyword>
<keyword id="KW-0406">Ion transport</keyword>
<keyword id="KW-0472">Membrane</keyword>
<keyword id="KW-0547">Nucleotide-binding</keyword>
<keyword id="KW-1278">Translocase</keyword>
<keyword id="KW-0813">Transport</keyword>
<reference key="1">
    <citation type="journal article" date="2004" name="Nat. Genet.">
        <title>Evidence in the Legionella pneumophila genome for exploitation of host cell functions and high genome plasticity.</title>
        <authorList>
            <person name="Cazalet C."/>
            <person name="Rusniok C."/>
            <person name="Brueggemann H."/>
            <person name="Zidane N."/>
            <person name="Magnier A."/>
            <person name="Ma L."/>
            <person name="Tichit M."/>
            <person name="Jarraud S."/>
            <person name="Bouchier C."/>
            <person name="Vandenesch F."/>
            <person name="Kunst F."/>
            <person name="Etienne J."/>
            <person name="Glaser P."/>
            <person name="Buchrieser C."/>
        </authorList>
    </citation>
    <scope>NUCLEOTIDE SEQUENCE [LARGE SCALE GENOMIC DNA]</scope>
    <source>
        <strain>Paris</strain>
    </source>
</reference>
<comment type="function">
    <text evidence="1">Produces ATP from ADP in the presence of a proton gradient across the membrane. The alpha chain is a regulatory subunit.</text>
</comment>
<comment type="catalytic activity">
    <reaction evidence="1">
        <text>ATP + H2O + 4 H(+)(in) = ADP + phosphate + 5 H(+)(out)</text>
        <dbReference type="Rhea" id="RHEA:57720"/>
        <dbReference type="ChEBI" id="CHEBI:15377"/>
        <dbReference type="ChEBI" id="CHEBI:15378"/>
        <dbReference type="ChEBI" id="CHEBI:30616"/>
        <dbReference type="ChEBI" id="CHEBI:43474"/>
        <dbReference type="ChEBI" id="CHEBI:456216"/>
        <dbReference type="EC" id="7.1.2.2"/>
    </reaction>
</comment>
<comment type="subunit">
    <text evidence="1">F-type ATPases have 2 components, CF(1) - the catalytic core - and CF(0) - the membrane proton channel. CF(1) has five subunits: alpha(3), beta(3), gamma(1), delta(1), epsilon(1). CF(0) has three main subunits: a(1), b(2) and c(9-12). The alpha and beta chains form an alternating ring which encloses part of the gamma chain. CF(1) is attached to CF(0) by a central stalk formed by the gamma and epsilon chains, while a peripheral stalk is formed by the delta and b chains.</text>
</comment>
<comment type="subcellular location">
    <subcellularLocation>
        <location evidence="1">Cell inner membrane</location>
        <topology evidence="1">Peripheral membrane protein</topology>
    </subcellularLocation>
</comment>
<comment type="similarity">
    <text evidence="1">Belongs to the ATPase alpha/beta chains family.</text>
</comment>
<name>ATPA1_LEGPA</name>
<evidence type="ECO:0000255" key="1">
    <source>
        <dbReference type="HAMAP-Rule" id="MF_01346"/>
    </source>
</evidence>
<accession>Q5X2Q3</accession>
<proteinExistence type="inferred from homology"/>
<gene>
    <name evidence="1" type="primary">atpA1</name>
    <name type="ordered locus">lpp2334</name>
</gene>
<dbReference type="EC" id="7.1.2.2" evidence="1"/>
<dbReference type="EMBL" id="CR628336">
    <property type="protein sequence ID" value="CAH13487.1"/>
    <property type="molecule type" value="Genomic_DNA"/>
</dbReference>
<dbReference type="RefSeq" id="WP_010946783.1">
    <property type="nucleotide sequence ID" value="NC_006368.1"/>
</dbReference>
<dbReference type="SMR" id="Q5X2Q3"/>
<dbReference type="KEGG" id="lpp:lpp2334"/>
<dbReference type="LegioList" id="lpp2334"/>
<dbReference type="HOGENOM" id="CLU_010091_2_1_6"/>
<dbReference type="GO" id="GO:0005886">
    <property type="term" value="C:plasma membrane"/>
    <property type="evidence" value="ECO:0007669"/>
    <property type="project" value="UniProtKB-SubCell"/>
</dbReference>
<dbReference type="GO" id="GO:0045259">
    <property type="term" value="C:proton-transporting ATP synthase complex"/>
    <property type="evidence" value="ECO:0007669"/>
    <property type="project" value="UniProtKB-KW"/>
</dbReference>
<dbReference type="GO" id="GO:0043531">
    <property type="term" value="F:ADP binding"/>
    <property type="evidence" value="ECO:0007669"/>
    <property type="project" value="TreeGrafter"/>
</dbReference>
<dbReference type="GO" id="GO:0005524">
    <property type="term" value="F:ATP binding"/>
    <property type="evidence" value="ECO:0007669"/>
    <property type="project" value="UniProtKB-UniRule"/>
</dbReference>
<dbReference type="GO" id="GO:0046933">
    <property type="term" value="F:proton-transporting ATP synthase activity, rotational mechanism"/>
    <property type="evidence" value="ECO:0007669"/>
    <property type="project" value="UniProtKB-UniRule"/>
</dbReference>
<dbReference type="CDD" id="cd18113">
    <property type="entry name" value="ATP-synt_F1_alpha_C"/>
    <property type="match status" value="1"/>
</dbReference>
<dbReference type="CDD" id="cd18116">
    <property type="entry name" value="ATP-synt_F1_alpha_N"/>
    <property type="match status" value="1"/>
</dbReference>
<dbReference type="CDD" id="cd01132">
    <property type="entry name" value="F1-ATPase_alpha_CD"/>
    <property type="match status" value="1"/>
</dbReference>
<dbReference type="FunFam" id="3.40.50.300:FF:002432">
    <property type="entry name" value="ATP synthase subunit alpha, mitochondrial"/>
    <property type="match status" value="1"/>
</dbReference>
<dbReference type="Gene3D" id="2.40.30.20">
    <property type="match status" value="1"/>
</dbReference>
<dbReference type="Gene3D" id="1.20.150.20">
    <property type="entry name" value="ATP synthase alpha/beta chain, C-terminal domain"/>
    <property type="match status" value="1"/>
</dbReference>
<dbReference type="Gene3D" id="3.40.50.300">
    <property type="entry name" value="P-loop containing nucleotide triphosphate hydrolases"/>
    <property type="match status" value="1"/>
</dbReference>
<dbReference type="HAMAP" id="MF_01346">
    <property type="entry name" value="ATP_synth_alpha_bact"/>
    <property type="match status" value="1"/>
</dbReference>
<dbReference type="InterPro" id="IPR023366">
    <property type="entry name" value="ATP_synth_asu-like_sf"/>
</dbReference>
<dbReference type="InterPro" id="IPR000793">
    <property type="entry name" value="ATP_synth_asu_C"/>
</dbReference>
<dbReference type="InterPro" id="IPR038376">
    <property type="entry name" value="ATP_synth_asu_C_sf"/>
</dbReference>
<dbReference type="InterPro" id="IPR033732">
    <property type="entry name" value="ATP_synth_F1_a_nt-bd_dom"/>
</dbReference>
<dbReference type="InterPro" id="IPR005294">
    <property type="entry name" value="ATP_synth_F1_asu"/>
</dbReference>
<dbReference type="InterPro" id="IPR020003">
    <property type="entry name" value="ATPase_a/bsu_AS"/>
</dbReference>
<dbReference type="InterPro" id="IPR036121">
    <property type="entry name" value="ATPase_F1/V1/A1_a/bsu_N_sf"/>
</dbReference>
<dbReference type="InterPro" id="IPR000194">
    <property type="entry name" value="ATPase_F1/V1/A1_a/bsu_nucl-bd"/>
</dbReference>
<dbReference type="InterPro" id="IPR027417">
    <property type="entry name" value="P-loop_NTPase"/>
</dbReference>
<dbReference type="NCBIfam" id="TIGR00962">
    <property type="entry name" value="atpA"/>
    <property type="match status" value="1"/>
</dbReference>
<dbReference type="NCBIfam" id="NF009884">
    <property type="entry name" value="PRK13343.1"/>
    <property type="match status" value="1"/>
</dbReference>
<dbReference type="PANTHER" id="PTHR48082">
    <property type="entry name" value="ATP SYNTHASE SUBUNIT ALPHA, MITOCHONDRIAL"/>
    <property type="match status" value="1"/>
</dbReference>
<dbReference type="PANTHER" id="PTHR48082:SF2">
    <property type="entry name" value="ATP SYNTHASE SUBUNIT ALPHA, MITOCHONDRIAL"/>
    <property type="match status" value="1"/>
</dbReference>
<dbReference type="Pfam" id="PF00006">
    <property type="entry name" value="ATP-synt_ab"/>
    <property type="match status" value="1"/>
</dbReference>
<dbReference type="Pfam" id="PF00306">
    <property type="entry name" value="ATP-synt_ab_C"/>
    <property type="match status" value="1"/>
</dbReference>
<dbReference type="SUPFAM" id="SSF47917">
    <property type="entry name" value="C-terminal domain of alpha and beta subunits of F1 ATP synthase"/>
    <property type="match status" value="1"/>
</dbReference>
<dbReference type="SUPFAM" id="SSF50615">
    <property type="entry name" value="N-terminal domain of alpha and beta subunits of F1 ATP synthase"/>
    <property type="match status" value="1"/>
</dbReference>
<dbReference type="SUPFAM" id="SSF52540">
    <property type="entry name" value="P-loop containing nucleoside triphosphate hydrolases"/>
    <property type="match status" value="1"/>
</dbReference>
<dbReference type="PROSITE" id="PS00152">
    <property type="entry name" value="ATPASE_ALPHA_BETA"/>
    <property type="match status" value="1"/>
</dbReference>
<protein>
    <recommendedName>
        <fullName evidence="1">ATP synthase subunit alpha 1</fullName>
        <ecNumber evidence="1">7.1.2.2</ecNumber>
    </recommendedName>
    <alternativeName>
        <fullName evidence="1">ATP synthase F1 sector subunit alpha 1</fullName>
    </alternativeName>
    <alternativeName>
        <fullName evidence="1">F-ATPase subunit alpha 1</fullName>
    </alternativeName>
</protein>
<sequence length="490" mass="54851">MNWSNTPSFLEKQRQRLERYQFQIKVSEQGRVVSVGDGIIWIKGLPGAAIDEILISEDECCIAMVFHLTEELVGAVMLVQTKKLKAGTPIFPLKRVLSIPVGDKLLGRVIDPLGHPLDGGEIPPHEEQGLLDRLSPPILHRDFVNRPLYTGNKMLDNLIPIGKGQRELLIGDNGLGKSALALDIVMNQKDKKVYCVYVLIGQKRSTVSSTIQLLKEANALDYTTVVVAQATALPGLLYLAPFAGCAIAEHWMKKGLDALVIYDDLSAHANSYRELSLLLRRPPGREAFPADIFYLHSRLLERSTCLSPALGGGSMTALPIIETKEGEMATYIPTNLISITDGQIFFDESLFSSGFLPAIDITKSVSRVGGKAQHPQIKKESGRMKLDYLQFLDLELFTRFGAKLDAKMQKQIQKGRVLREILKQERFSPLPIEFQLAWLIAYNEGFFDELNLEDIPKMLKKIEEEIKQSTLSLGSPREQWKKAIKEWLMA</sequence>
<organism>
    <name type="scientific">Legionella pneumophila (strain Paris)</name>
    <dbReference type="NCBI Taxonomy" id="297246"/>
    <lineage>
        <taxon>Bacteria</taxon>
        <taxon>Pseudomonadati</taxon>
        <taxon>Pseudomonadota</taxon>
        <taxon>Gammaproteobacteria</taxon>
        <taxon>Legionellales</taxon>
        <taxon>Legionellaceae</taxon>
        <taxon>Legionella</taxon>
    </lineage>
</organism>
<feature type="chain" id="PRO_0000238270" description="ATP synthase subunit alpha 1">
    <location>
        <begin position="1"/>
        <end position="490"/>
    </location>
</feature>
<feature type="site" description="Required for activity" evidence="1">
    <location>
        <position position="364"/>
    </location>
</feature>